<accession>B2GEP6</accession>
<name>GAL1_LIMF3</name>
<protein>
    <recommendedName>
        <fullName evidence="1">Galactokinase</fullName>
        <ecNumber evidence="1">2.7.1.6</ecNumber>
    </recommendedName>
    <alternativeName>
        <fullName evidence="1">Galactose kinase</fullName>
    </alternativeName>
</protein>
<feature type="chain" id="PRO_1000100832" description="Galactokinase">
    <location>
        <begin position="1"/>
        <end position="388"/>
    </location>
</feature>
<feature type="active site" description="Proton acceptor" evidence="1">
    <location>
        <position position="175"/>
    </location>
</feature>
<feature type="binding site" evidence="1">
    <location>
        <begin position="33"/>
        <end position="36"/>
    </location>
    <ligand>
        <name>substrate</name>
    </ligand>
</feature>
<feature type="binding site" evidence="1">
    <location>
        <position position="67"/>
    </location>
    <ligand>
        <name>ATP</name>
        <dbReference type="ChEBI" id="CHEBI:30616"/>
    </ligand>
</feature>
<feature type="binding site" evidence="1">
    <location>
        <begin position="125"/>
        <end position="131"/>
    </location>
    <ligand>
        <name>ATP</name>
        <dbReference type="ChEBI" id="CHEBI:30616"/>
    </ligand>
</feature>
<feature type="binding site" evidence="1">
    <location>
        <position position="131"/>
    </location>
    <ligand>
        <name>Mg(2+)</name>
        <dbReference type="ChEBI" id="CHEBI:18420"/>
    </ligand>
</feature>
<feature type="binding site" evidence="1">
    <location>
        <position position="163"/>
    </location>
    <ligand>
        <name>Mg(2+)</name>
        <dbReference type="ChEBI" id="CHEBI:18420"/>
    </ligand>
</feature>
<feature type="binding site" evidence="1">
    <location>
        <position position="225"/>
    </location>
    <ligand>
        <name>substrate</name>
    </ligand>
</feature>
<feature type="site" description="Transition state stabilizer" evidence="1">
    <location>
        <position position="27"/>
    </location>
</feature>
<dbReference type="EC" id="2.7.1.6" evidence="1"/>
<dbReference type="EMBL" id="AP008937">
    <property type="protein sequence ID" value="BAG28128.1"/>
    <property type="molecule type" value="Genomic_DNA"/>
</dbReference>
<dbReference type="RefSeq" id="WP_012391786.1">
    <property type="nucleotide sequence ID" value="NC_010610.1"/>
</dbReference>
<dbReference type="SMR" id="B2GEP6"/>
<dbReference type="KEGG" id="lfe:LAF_1792"/>
<dbReference type="PATRIC" id="fig|334390.5.peg.1974"/>
<dbReference type="eggNOG" id="COG0153">
    <property type="taxonomic scope" value="Bacteria"/>
</dbReference>
<dbReference type="HOGENOM" id="CLU_017814_2_1_9"/>
<dbReference type="UniPathway" id="UPA00214"/>
<dbReference type="Proteomes" id="UP000001697">
    <property type="component" value="Chromosome"/>
</dbReference>
<dbReference type="GO" id="GO:0005829">
    <property type="term" value="C:cytosol"/>
    <property type="evidence" value="ECO:0007669"/>
    <property type="project" value="TreeGrafter"/>
</dbReference>
<dbReference type="GO" id="GO:0005524">
    <property type="term" value="F:ATP binding"/>
    <property type="evidence" value="ECO:0007669"/>
    <property type="project" value="UniProtKB-UniRule"/>
</dbReference>
<dbReference type="GO" id="GO:0004335">
    <property type="term" value="F:galactokinase activity"/>
    <property type="evidence" value="ECO:0007669"/>
    <property type="project" value="UniProtKB-UniRule"/>
</dbReference>
<dbReference type="GO" id="GO:0000287">
    <property type="term" value="F:magnesium ion binding"/>
    <property type="evidence" value="ECO:0007669"/>
    <property type="project" value="UniProtKB-UniRule"/>
</dbReference>
<dbReference type="GO" id="GO:0006012">
    <property type="term" value="P:galactose metabolic process"/>
    <property type="evidence" value="ECO:0007669"/>
    <property type="project" value="UniProtKB-UniRule"/>
</dbReference>
<dbReference type="FunFam" id="3.30.230.10:FF:000017">
    <property type="entry name" value="Galactokinase"/>
    <property type="match status" value="1"/>
</dbReference>
<dbReference type="FunFam" id="3.30.70.890:FF:000001">
    <property type="entry name" value="Galactokinase"/>
    <property type="match status" value="1"/>
</dbReference>
<dbReference type="Gene3D" id="3.30.230.10">
    <property type="match status" value="1"/>
</dbReference>
<dbReference type="Gene3D" id="3.30.70.890">
    <property type="entry name" value="GHMP kinase, C-terminal domain"/>
    <property type="match status" value="1"/>
</dbReference>
<dbReference type="HAMAP" id="MF_00246">
    <property type="entry name" value="Galactokinase"/>
    <property type="match status" value="1"/>
</dbReference>
<dbReference type="InterPro" id="IPR000705">
    <property type="entry name" value="Galactokinase"/>
</dbReference>
<dbReference type="InterPro" id="IPR022963">
    <property type="entry name" value="Galactokinase_bac"/>
</dbReference>
<dbReference type="InterPro" id="IPR019741">
    <property type="entry name" value="Galactokinase_CS"/>
</dbReference>
<dbReference type="InterPro" id="IPR019539">
    <property type="entry name" value="GalKase_N"/>
</dbReference>
<dbReference type="InterPro" id="IPR013750">
    <property type="entry name" value="GHMP_kinase_C_dom"/>
</dbReference>
<dbReference type="InterPro" id="IPR036554">
    <property type="entry name" value="GHMP_kinase_C_sf"/>
</dbReference>
<dbReference type="InterPro" id="IPR006204">
    <property type="entry name" value="GHMP_kinase_N_dom"/>
</dbReference>
<dbReference type="InterPro" id="IPR006203">
    <property type="entry name" value="GHMP_knse_ATP-bd_CS"/>
</dbReference>
<dbReference type="InterPro" id="IPR006206">
    <property type="entry name" value="Mevalonate/galactokinase"/>
</dbReference>
<dbReference type="InterPro" id="IPR020568">
    <property type="entry name" value="Ribosomal_Su5_D2-typ_SF"/>
</dbReference>
<dbReference type="InterPro" id="IPR014721">
    <property type="entry name" value="Ribsml_uS5_D2-typ_fold_subgr"/>
</dbReference>
<dbReference type="NCBIfam" id="TIGR00131">
    <property type="entry name" value="gal_kin"/>
    <property type="match status" value="1"/>
</dbReference>
<dbReference type="NCBIfam" id="NF003705">
    <property type="entry name" value="PRK05322.1"/>
    <property type="match status" value="1"/>
</dbReference>
<dbReference type="PANTHER" id="PTHR10457:SF7">
    <property type="entry name" value="GALACTOKINASE-RELATED"/>
    <property type="match status" value="1"/>
</dbReference>
<dbReference type="PANTHER" id="PTHR10457">
    <property type="entry name" value="MEVALONATE KINASE/GALACTOKINASE"/>
    <property type="match status" value="1"/>
</dbReference>
<dbReference type="Pfam" id="PF10509">
    <property type="entry name" value="GalKase_gal_bdg"/>
    <property type="match status" value="1"/>
</dbReference>
<dbReference type="Pfam" id="PF08544">
    <property type="entry name" value="GHMP_kinases_C"/>
    <property type="match status" value="1"/>
</dbReference>
<dbReference type="Pfam" id="PF00288">
    <property type="entry name" value="GHMP_kinases_N"/>
    <property type="match status" value="1"/>
</dbReference>
<dbReference type="PIRSF" id="PIRSF000530">
    <property type="entry name" value="Galactokinase"/>
    <property type="match status" value="1"/>
</dbReference>
<dbReference type="PRINTS" id="PR00473">
    <property type="entry name" value="GALCTOKINASE"/>
</dbReference>
<dbReference type="PRINTS" id="PR00959">
    <property type="entry name" value="MEVGALKINASE"/>
</dbReference>
<dbReference type="SUPFAM" id="SSF55060">
    <property type="entry name" value="GHMP Kinase, C-terminal domain"/>
    <property type="match status" value="1"/>
</dbReference>
<dbReference type="SUPFAM" id="SSF54211">
    <property type="entry name" value="Ribosomal protein S5 domain 2-like"/>
    <property type="match status" value="1"/>
</dbReference>
<dbReference type="PROSITE" id="PS00106">
    <property type="entry name" value="GALACTOKINASE"/>
    <property type="match status" value="1"/>
</dbReference>
<dbReference type="PROSITE" id="PS00627">
    <property type="entry name" value="GHMP_KINASES_ATP"/>
    <property type="match status" value="1"/>
</dbReference>
<proteinExistence type="inferred from homology"/>
<comment type="function">
    <text evidence="1">Catalyzes the transfer of the gamma-phosphate of ATP to D-galactose to form alpha-D-galactose-1-phosphate (Gal-1-P).</text>
</comment>
<comment type="catalytic activity">
    <reaction evidence="1">
        <text>alpha-D-galactose + ATP = alpha-D-galactose 1-phosphate + ADP + H(+)</text>
        <dbReference type="Rhea" id="RHEA:13553"/>
        <dbReference type="ChEBI" id="CHEBI:15378"/>
        <dbReference type="ChEBI" id="CHEBI:28061"/>
        <dbReference type="ChEBI" id="CHEBI:30616"/>
        <dbReference type="ChEBI" id="CHEBI:58336"/>
        <dbReference type="ChEBI" id="CHEBI:456216"/>
        <dbReference type="EC" id="2.7.1.6"/>
    </reaction>
</comment>
<comment type="pathway">
    <text evidence="1">Carbohydrate metabolism; galactose metabolism.</text>
</comment>
<comment type="subcellular location">
    <subcellularLocation>
        <location evidence="1">Cytoplasm</location>
    </subcellularLocation>
</comment>
<comment type="similarity">
    <text evidence="1">Belongs to the GHMP kinase family. GalK subfamily.</text>
</comment>
<evidence type="ECO:0000255" key="1">
    <source>
        <dbReference type="HAMAP-Rule" id="MF_00246"/>
    </source>
</evidence>
<organism>
    <name type="scientific">Limosilactobacillus fermentum (strain NBRC 3956 / LMG 18251)</name>
    <name type="common">Lactobacillus fermentum</name>
    <dbReference type="NCBI Taxonomy" id="334390"/>
    <lineage>
        <taxon>Bacteria</taxon>
        <taxon>Bacillati</taxon>
        <taxon>Bacillota</taxon>
        <taxon>Bacilli</taxon>
        <taxon>Lactobacillales</taxon>
        <taxon>Lactobacillaceae</taxon>
        <taxon>Limosilactobacillus</taxon>
    </lineage>
</organism>
<sequence length="388" mass="43256">MNQQELFDKYQDTFAAQGQDLFFSPGRINVIGEHTDYNGGHVFPCAISLGTYGVYGVRDDDQVQLFSGNMEGDVVSFAITDEAPEEAEDRKWANYFKGMLVYLRQKGFKIDHGFNLYVYGNLPYGAGLSSSASIEMLMGQVLKDEFNLDIDQIDLVKLGQKTENDFVGLNSGIMDQFAVGMGKKDNAIFLDCNTLEYKYMPLELGDYEIVIMSTNKKHSLAASAYNDRVAECGEALKRLQTKLDINSLGEIDEDTFDEYSYLLNDETLLKRTRHAVFENQRTIQATKAMTDGDLEKLGRLINASHVSLHFDYEVSGTELDTLAEAAWQQPGVLGARMIGGGFAGSAIAIVKKDQAENLKQKVGEIYREKVGYDASFYDAEIVDGPHKL</sequence>
<gene>
    <name evidence="1" type="primary">galK</name>
    <name type="ordered locus">LAF_1792</name>
</gene>
<keyword id="KW-0067">ATP-binding</keyword>
<keyword id="KW-0119">Carbohydrate metabolism</keyword>
<keyword id="KW-0963">Cytoplasm</keyword>
<keyword id="KW-0299">Galactose metabolism</keyword>
<keyword id="KW-0418">Kinase</keyword>
<keyword id="KW-0460">Magnesium</keyword>
<keyword id="KW-0479">Metal-binding</keyword>
<keyword id="KW-0547">Nucleotide-binding</keyword>
<keyword id="KW-1185">Reference proteome</keyword>
<keyword id="KW-0808">Transferase</keyword>
<reference key="1">
    <citation type="journal article" date="2008" name="DNA Res.">
        <title>Comparative genome analysis of Lactobacillus reuteri and Lactobacillus fermentum reveal a genomic island for reuterin and cobalamin production.</title>
        <authorList>
            <person name="Morita H."/>
            <person name="Toh H."/>
            <person name="Fukuda S."/>
            <person name="Horikawa H."/>
            <person name="Oshima K."/>
            <person name="Suzuki T."/>
            <person name="Murakami M."/>
            <person name="Hisamatsu S."/>
            <person name="Kato Y."/>
            <person name="Takizawa T."/>
            <person name="Fukuoka H."/>
            <person name="Yoshimura T."/>
            <person name="Itoh K."/>
            <person name="O'Sullivan D.J."/>
            <person name="McKay L.L."/>
            <person name="Ohno H."/>
            <person name="Kikuchi J."/>
            <person name="Masaoka T."/>
            <person name="Hattori M."/>
        </authorList>
    </citation>
    <scope>NUCLEOTIDE SEQUENCE [LARGE SCALE GENOMIC DNA]</scope>
    <source>
        <strain>NBRC 3956 / LMG 18251</strain>
    </source>
</reference>